<dbReference type="EC" id="2.3.2.27" evidence="4"/>
<dbReference type="EMBL" id="AC016041">
    <property type="protein sequence ID" value="AAF69723.1"/>
    <property type="status" value="ALT_SEQ"/>
    <property type="molecule type" value="Genomic_DNA"/>
</dbReference>
<dbReference type="EMBL" id="CP002684">
    <property type="protein sequence ID" value="AEE32406.1"/>
    <property type="molecule type" value="Genomic_DNA"/>
</dbReference>
<dbReference type="EMBL" id="DQ056489">
    <property type="protein sequence ID" value="AAY78646.1"/>
    <property type="molecule type" value="mRNA"/>
</dbReference>
<dbReference type="PIR" id="G96528">
    <property type="entry name" value="G96528"/>
</dbReference>
<dbReference type="RefSeq" id="NP_175348.1">
    <property type="nucleotide sequence ID" value="NM_103812.1"/>
</dbReference>
<dbReference type="SMR" id="P0C034"/>
<dbReference type="STRING" id="3702.P0C034"/>
<dbReference type="PaxDb" id="3702-AT1G49220.1"/>
<dbReference type="EnsemblPlants" id="AT1G49220.1">
    <property type="protein sequence ID" value="AT1G49220.1"/>
    <property type="gene ID" value="AT1G49220"/>
</dbReference>
<dbReference type="GeneID" id="841345"/>
<dbReference type="Gramene" id="AT1G49220.1">
    <property type="protein sequence ID" value="AT1G49220.1"/>
    <property type="gene ID" value="AT1G49220"/>
</dbReference>
<dbReference type="KEGG" id="ath:AT1G49220"/>
<dbReference type="Araport" id="AT1G49220"/>
<dbReference type="TAIR" id="AT1G49220">
    <property type="gene designation" value="ATL10"/>
</dbReference>
<dbReference type="eggNOG" id="KOG0800">
    <property type="taxonomic scope" value="Eukaryota"/>
</dbReference>
<dbReference type="HOGENOM" id="CLU_013137_9_0_1"/>
<dbReference type="InParanoid" id="P0C034"/>
<dbReference type="OMA" id="KCRNCLV"/>
<dbReference type="OrthoDB" id="8062037at2759"/>
<dbReference type="PhylomeDB" id="P0C034"/>
<dbReference type="UniPathway" id="UPA00143"/>
<dbReference type="PRO" id="PR:P0C034"/>
<dbReference type="Proteomes" id="UP000006548">
    <property type="component" value="Chromosome 1"/>
</dbReference>
<dbReference type="ExpressionAtlas" id="P0C034">
    <property type="expression patterns" value="baseline and differential"/>
</dbReference>
<dbReference type="GO" id="GO:0016020">
    <property type="term" value="C:membrane"/>
    <property type="evidence" value="ECO:0007669"/>
    <property type="project" value="UniProtKB-SubCell"/>
</dbReference>
<dbReference type="GO" id="GO:0016740">
    <property type="term" value="F:transferase activity"/>
    <property type="evidence" value="ECO:0007669"/>
    <property type="project" value="UniProtKB-KW"/>
</dbReference>
<dbReference type="GO" id="GO:0008270">
    <property type="term" value="F:zinc ion binding"/>
    <property type="evidence" value="ECO:0007669"/>
    <property type="project" value="UniProtKB-KW"/>
</dbReference>
<dbReference type="GO" id="GO:0016567">
    <property type="term" value="P:protein ubiquitination"/>
    <property type="evidence" value="ECO:0007669"/>
    <property type="project" value="UniProtKB-UniPathway"/>
</dbReference>
<dbReference type="CDD" id="cd16461">
    <property type="entry name" value="RING-H2_EL5-like"/>
    <property type="match status" value="1"/>
</dbReference>
<dbReference type="FunFam" id="3.30.40.10:FF:000632">
    <property type="entry name" value="RING-H2 finger protein ATL73"/>
    <property type="match status" value="1"/>
</dbReference>
<dbReference type="Gene3D" id="3.30.40.10">
    <property type="entry name" value="Zinc/RING finger domain, C3HC4 (zinc finger)"/>
    <property type="match status" value="1"/>
</dbReference>
<dbReference type="InterPro" id="IPR044602">
    <property type="entry name" value="ATL10/ATL72-79-like"/>
</dbReference>
<dbReference type="InterPro" id="IPR001841">
    <property type="entry name" value="Znf_RING"/>
</dbReference>
<dbReference type="InterPro" id="IPR013083">
    <property type="entry name" value="Znf_RING/FYVE/PHD"/>
</dbReference>
<dbReference type="PANTHER" id="PTHR46905:SF10">
    <property type="entry name" value="E3 UBIQUITIN-PROTEIN LIGASE ATL76-RELATED"/>
    <property type="match status" value="1"/>
</dbReference>
<dbReference type="PANTHER" id="PTHR46905">
    <property type="entry name" value="RING-H2 FINGER PROTEIN ATL78"/>
    <property type="match status" value="1"/>
</dbReference>
<dbReference type="Pfam" id="PF13639">
    <property type="entry name" value="zf-RING_2"/>
    <property type="match status" value="1"/>
</dbReference>
<dbReference type="SMART" id="SM00184">
    <property type="entry name" value="RING"/>
    <property type="match status" value="1"/>
</dbReference>
<dbReference type="SUPFAM" id="SSF57850">
    <property type="entry name" value="RING/U-box"/>
    <property type="match status" value="1"/>
</dbReference>
<dbReference type="PROSITE" id="PS50089">
    <property type="entry name" value="ZF_RING_2"/>
    <property type="match status" value="1"/>
</dbReference>
<sequence length="251" mass="27809">MSANELPSSAQAFQEQFLGGFVSRKLLLHNPFDHNTQRAFAVAPSPLITHENNLSGNVMMLLSILICGIICCLGLHYIIRCALRRSTRFMISEPVPSLSSTRGSSNKGIKKKALRMFPVVSYSPEMNLPGLDEECVICLSDFVSGEQLRLLPKCNHGFHVRCIDKWLQQHLTCPKCRNCLVETCQKILGDFSQADSVTAEPTEIVIVTIVPLEPTEIVIVTIAPLEPTEIVIVMIAPLEPEGRVNTIREIS</sequence>
<keyword id="KW-0472">Membrane</keyword>
<keyword id="KW-0479">Metal-binding</keyword>
<keyword id="KW-1185">Reference proteome</keyword>
<keyword id="KW-0808">Transferase</keyword>
<keyword id="KW-0812">Transmembrane</keyword>
<keyword id="KW-1133">Transmembrane helix</keyword>
<keyword id="KW-0833">Ubl conjugation pathway</keyword>
<keyword id="KW-0862">Zinc</keyword>
<keyword id="KW-0863">Zinc-finger</keyword>
<organism>
    <name type="scientific">Arabidopsis thaliana</name>
    <name type="common">Mouse-ear cress</name>
    <dbReference type="NCBI Taxonomy" id="3702"/>
    <lineage>
        <taxon>Eukaryota</taxon>
        <taxon>Viridiplantae</taxon>
        <taxon>Streptophyta</taxon>
        <taxon>Embryophyta</taxon>
        <taxon>Tracheophyta</taxon>
        <taxon>Spermatophyta</taxon>
        <taxon>Magnoliopsida</taxon>
        <taxon>eudicotyledons</taxon>
        <taxon>Gunneridae</taxon>
        <taxon>Pentapetalae</taxon>
        <taxon>rosids</taxon>
        <taxon>malvids</taxon>
        <taxon>Brassicales</taxon>
        <taxon>Brassicaceae</taxon>
        <taxon>Camelineae</taxon>
        <taxon>Arabidopsis</taxon>
    </lineage>
</organism>
<protein>
    <recommendedName>
        <fullName>RING-H2 finger protein ATL10</fullName>
        <ecNumber evidence="4">2.3.2.27</ecNumber>
    </recommendedName>
    <alternativeName>
        <fullName evidence="4">RING-type E3 ubiquitin transferase ATL10</fullName>
    </alternativeName>
</protein>
<evidence type="ECO:0000250" key="1"/>
<evidence type="ECO:0000255" key="2"/>
<evidence type="ECO:0000255" key="3">
    <source>
        <dbReference type="PROSITE-ProRule" id="PRU00175"/>
    </source>
</evidence>
<evidence type="ECO:0000305" key="4"/>
<reference key="1">
    <citation type="journal article" date="2000" name="Nature">
        <title>Sequence and analysis of chromosome 1 of the plant Arabidopsis thaliana.</title>
        <authorList>
            <person name="Theologis A."/>
            <person name="Ecker J.R."/>
            <person name="Palm C.J."/>
            <person name="Federspiel N.A."/>
            <person name="Kaul S."/>
            <person name="White O."/>
            <person name="Alonso J."/>
            <person name="Altafi H."/>
            <person name="Araujo R."/>
            <person name="Bowman C.L."/>
            <person name="Brooks S.Y."/>
            <person name="Buehler E."/>
            <person name="Chan A."/>
            <person name="Chao Q."/>
            <person name="Chen H."/>
            <person name="Cheuk R.F."/>
            <person name="Chin C.W."/>
            <person name="Chung M.K."/>
            <person name="Conn L."/>
            <person name="Conway A.B."/>
            <person name="Conway A.R."/>
            <person name="Creasy T.H."/>
            <person name="Dewar K."/>
            <person name="Dunn P."/>
            <person name="Etgu P."/>
            <person name="Feldblyum T.V."/>
            <person name="Feng J.-D."/>
            <person name="Fong B."/>
            <person name="Fujii C.Y."/>
            <person name="Gill J.E."/>
            <person name="Goldsmith A.D."/>
            <person name="Haas B."/>
            <person name="Hansen N.F."/>
            <person name="Hughes B."/>
            <person name="Huizar L."/>
            <person name="Hunter J.L."/>
            <person name="Jenkins J."/>
            <person name="Johnson-Hopson C."/>
            <person name="Khan S."/>
            <person name="Khaykin E."/>
            <person name="Kim C.J."/>
            <person name="Koo H.L."/>
            <person name="Kremenetskaia I."/>
            <person name="Kurtz D.B."/>
            <person name="Kwan A."/>
            <person name="Lam B."/>
            <person name="Langin-Hooper S."/>
            <person name="Lee A."/>
            <person name="Lee J.M."/>
            <person name="Lenz C.A."/>
            <person name="Li J.H."/>
            <person name="Li Y.-P."/>
            <person name="Lin X."/>
            <person name="Liu S.X."/>
            <person name="Liu Z.A."/>
            <person name="Luros J.S."/>
            <person name="Maiti R."/>
            <person name="Marziali A."/>
            <person name="Militscher J."/>
            <person name="Miranda M."/>
            <person name="Nguyen M."/>
            <person name="Nierman W.C."/>
            <person name="Osborne B.I."/>
            <person name="Pai G."/>
            <person name="Peterson J."/>
            <person name="Pham P.K."/>
            <person name="Rizzo M."/>
            <person name="Rooney T."/>
            <person name="Rowley D."/>
            <person name="Sakano H."/>
            <person name="Salzberg S.L."/>
            <person name="Schwartz J.R."/>
            <person name="Shinn P."/>
            <person name="Southwick A.M."/>
            <person name="Sun H."/>
            <person name="Tallon L.J."/>
            <person name="Tambunga G."/>
            <person name="Toriumi M.J."/>
            <person name="Town C.D."/>
            <person name="Utterback T."/>
            <person name="Van Aken S."/>
            <person name="Vaysberg M."/>
            <person name="Vysotskaia V.S."/>
            <person name="Walker M."/>
            <person name="Wu D."/>
            <person name="Yu G."/>
            <person name="Fraser C.M."/>
            <person name="Venter J.C."/>
            <person name="Davis R.W."/>
        </authorList>
    </citation>
    <scope>NUCLEOTIDE SEQUENCE [LARGE SCALE GENOMIC DNA]</scope>
    <source>
        <strain>cv. Columbia</strain>
    </source>
</reference>
<reference key="2">
    <citation type="journal article" date="2017" name="Plant J.">
        <title>Araport11: a complete reannotation of the Arabidopsis thaliana reference genome.</title>
        <authorList>
            <person name="Cheng C.Y."/>
            <person name="Krishnakumar V."/>
            <person name="Chan A.P."/>
            <person name="Thibaud-Nissen F."/>
            <person name="Schobel S."/>
            <person name="Town C.D."/>
        </authorList>
    </citation>
    <scope>GENOME REANNOTATION</scope>
    <source>
        <strain>cv. Columbia</strain>
    </source>
</reference>
<reference key="3">
    <citation type="submission" date="2005-05" db="EMBL/GenBank/DDBJ databases">
        <authorList>
            <person name="Underwood B.A."/>
            <person name="Xiao Y.-L."/>
            <person name="Moskal W.A. Jr."/>
            <person name="Monaghan E.L."/>
            <person name="Wang W."/>
            <person name="Redman J.C."/>
            <person name="Wu H.C."/>
            <person name="Utterback T."/>
            <person name="Town C.D."/>
        </authorList>
    </citation>
    <scope>NUCLEOTIDE SEQUENCE [LARGE SCALE MRNA]</scope>
    <source>
        <strain>cv. Columbia</strain>
    </source>
</reference>
<reference key="4">
    <citation type="journal article" date="2002" name="Genome Biol.">
        <title>Evaluation and classification of RING-finger domains encoded by the Arabidopsis genome.</title>
        <authorList>
            <person name="Kosarev P."/>
            <person name="Mayer K.F.X."/>
            <person name="Hardtke C.S."/>
        </authorList>
    </citation>
    <scope>GENE FAMILY ORGANIZATION</scope>
</reference>
<reference key="5">
    <citation type="journal article" date="2004" name="Genetics">
        <title>Isolation and gene expression analysis of Arabidopsis thaliana mutants with constitutive expression of ATL2, an early elicitor-response RING-H2 zinc-finger gene.</title>
        <authorList>
            <person name="Serrano M."/>
            <person name="Guzman P."/>
        </authorList>
    </citation>
    <scope>IDENTIFICATION</scope>
</reference>
<reference key="6">
    <citation type="journal article" date="2006" name="J. Mol. Evol.">
        <title>The ATL gene family from Arabidopsis thaliana and Oryza sativa comprises a large number of putative ubiquitin ligases of the RING-H2 type.</title>
        <authorList>
            <person name="Serrano M."/>
            <person name="Parra S."/>
            <person name="Alcaraz L.D."/>
            <person name="Guzman P."/>
        </authorList>
    </citation>
    <scope>NOMENCLATURE</scope>
    <scope>GENE FAMILY ORGANIZATION</scope>
</reference>
<comment type="catalytic activity">
    <reaction evidence="4">
        <text>S-ubiquitinyl-[E2 ubiquitin-conjugating enzyme]-L-cysteine + [acceptor protein]-L-lysine = [E2 ubiquitin-conjugating enzyme]-L-cysteine + N(6)-ubiquitinyl-[acceptor protein]-L-lysine.</text>
        <dbReference type="EC" id="2.3.2.27"/>
    </reaction>
</comment>
<comment type="pathway">
    <text>Protein modification; protein ubiquitination.</text>
</comment>
<comment type="subcellular location">
    <subcellularLocation>
        <location evidence="4">Membrane</location>
        <topology evidence="4">Single-pass membrane protein</topology>
    </subcellularLocation>
</comment>
<comment type="domain">
    <text evidence="1">The RING-type zinc finger domain mediates binding to an E2 ubiquitin-conjugating enzyme.</text>
</comment>
<comment type="similarity">
    <text evidence="4">Belongs to the RING-type zinc finger family. ATL subfamily.</text>
</comment>
<comment type="sequence caution" evidence="4">
    <conflict type="erroneous gene model prediction">
        <sequence resource="EMBL-CDS" id="AAF69723"/>
    </conflict>
    <text>The predicted gene At1g49220 has been split into 2 genes: At1g49220 and At1g49230.</text>
</comment>
<feature type="chain" id="PRO_0000055768" description="RING-H2 finger protein ATL10">
    <location>
        <begin position="1"/>
        <end position="251"/>
    </location>
</feature>
<feature type="transmembrane region" description="Helical" evidence="2">
    <location>
        <begin position="59"/>
        <end position="79"/>
    </location>
</feature>
<feature type="zinc finger region" description="RING-type; atypical" evidence="3">
    <location>
        <begin position="135"/>
        <end position="177"/>
    </location>
</feature>
<name>ATL10_ARATH</name>
<gene>
    <name type="primary">ATL10</name>
    <name type="ordered locus">At1g49220</name>
    <name type="ORF">F27J15.37</name>
</gene>
<accession>P0C034</accession>
<accession>Q4PSZ7</accession>
<accession>Q9M9C1</accession>
<proteinExistence type="evidence at transcript level"/>